<feature type="chain" id="PRO_0000396034" description="F-box protein At2g14710">
    <location>
        <begin position="1"/>
        <end position="362"/>
    </location>
</feature>
<feature type="domain" description="F-box" evidence="1">
    <location>
        <begin position="1"/>
        <end position="47"/>
    </location>
</feature>
<organism>
    <name type="scientific">Arabidopsis thaliana</name>
    <name type="common">Mouse-ear cress</name>
    <dbReference type="NCBI Taxonomy" id="3702"/>
    <lineage>
        <taxon>Eukaryota</taxon>
        <taxon>Viridiplantae</taxon>
        <taxon>Streptophyta</taxon>
        <taxon>Embryophyta</taxon>
        <taxon>Tracheophyta</taxon>
        <taxon>Spermatophyta</taxon>
        <taxon>Magnoliopsida</taxon>
        <taxon>eudicotyledons</taxon>
        <taxon>Gunneridae</taxon>
        <taxon>Pentapetalae</taxon>
        <taxon>rosids</taxon>
        <taxon>malvids</taxon>
        <taxon>Brassicales</taxon>
        <taxon>Brassicaceae</taxon>
        <taxon>Camelineae</taxon>
        <taxon>Arabidopsis</taxon>
    </lineage>
</organism>
<protein>
    <recommendedName>
        <fullName>F-box protein At2g14710</fullName>
    </recommendedName>
</protein>
<sequence>MAHLKNLPWELIEEILSRVPPKSLVRFRTVSKQWNALFDDKTFINNHKMTFRFILATKSKIYSVSIDPVIVVRELPLGIPGLESLELNNLVDCNELLVCVKNNGAVVWNPWLGQSRWIQPSLNHSPMVFDGIVYDNKKYKMVAFSGLWKIYDFSSDVWIDHKSKSTNSNTNVINVQTAVCLNGNLYWVCFREKTDPLCYHIHKFGFSNSIWVRFCNLPFGRNHDGDALVLGVFRGDRFSLLKQCMVTKKIEVFVTENKINHENGDDVVWKNFMTFSSPNLPDLVETVKFSNPSYFIEGKRLVVCSRDNTGHAWIYILGDSKLISKTRIECVVDPWPLHCTFVPSLVPVPAPCRREEQAELQV</sequence>
<name>FB319_ARATH</name>
<proteinExistence type="evidence at transcript level"/>
<dbReference type="EMBL" id="AC004705">
    <property type="protein sequence ID" value="AAC24186.1"/>
    <property type="molecule type" value="Genomic_DNA"/>
</dbReference>
<dbReference type="EMBL" id="AC005398">
    <property type="protein sequence ID" value="AAM15050.1"/>
    <property type="molecule type" value="Genomic_DNA"/>
</dbReference>
<dbReference type="EMBL" id="CP002685">
    <property type="protein sequence ID" value="AEC06325.1"/>
    <property type="molecule type" value="Genomic_DNA"/>
</dbReference>
<dbReference type="EMBL" id="AY954786">
    <property type="protein sequence ID" value="AAX55112.1"/>
    <property type="molecule type" value="Genomic_DNA"/>
</dbReference>
<dbReference type="EMBL" id="AY234415">
    <property type="protein sequence ID" value="AAO92059.1"/>
    <property type="molecule type" value="mRNA"/>
</dbReference>
<dbReference type="PIR" id="T02605">
    <property type="entry name" value="T02605"/>
</dbReference>
<dbReference type="RefSeq" id="NP_179078.1">
    <property type="nucleotide sequence ID" value="NM_127035.2"/>
</dbReference>
<dbReference type="BioGRID" id="1318">
    <property type="interactions" value="6"/>
</dbReference>
<dbReference type="STRING" id="3702.O80980"/>
<dbReference type="PaxDb" id="3702-AT2G14710.1"/>
<dbReference type="EnsemblPlants" id="AT2G14710.1">
    <property type="protein sequence ID" value="AT2G14710.1"/>
    <property type="gene ID" value="AT2G14710"/>
</dbReference>
<dbReference type="GeneID" id="815959"/>
<dbReference type="Gramene" id="AT2G14710.1">
    <property type="protein sequence ID" value="AT2G14710.1"/>
    <property type="gene ID" value="AT2G14710"/>
</dbReference>
<dbReference type="KEGG" id="ath:AT2G14710"/>
<dbReference type="Araport" id="AT2G14710"/>
<dbReference type="TAIR" id="AT2G14710"/>
<dbReference type="HOGENOM" id="CLU_034692_2_1_1"/>
<dbReference type="InParanoid" id="O80980"/>
<dbReference type="OMA" id="WINFMEV"/>
<dbReference type="PhylomeDB" id="O80980"/>
<dbReference type="PRO" id="PR:O80980"/>
<dbReference type="Proteomes" id="UP000006548">
    <property type="component" value="Chromosome 2"/>
</dbReference>
<dbReference type="ExpressionAtlas" id="O80980">
    <property type="expression patterns" value="baseline"/>
</dbReference>
<dbReference type="CDD" id="cd22157">
    <property type="entry name" value="F-box_AtFBW1-like"/>
    <property type="match status" value="1"/>
</dbReference>
<dbReference type="Gene3D" id="1.20.1280.50">
    <property type="match status" value="1"/>
</dbReference>
<dbReference type="InterPro" id="IPR006527">
    <property type="entry name" value="F-box-assoc_dom_typ1"/>
</dbReference>
<dbReference type="InterPro" id="IPR017451">
    <property type="entry name" value="F-box-assoc_interact_dom"/>
</dbReference>
<dbReference type="InterPro" id="IPR036047">
    <property type="entry name" value="F-box-like_dom_sf"/>
</dbReference>
<dbReference type="InterPro" id="IPR001810">
    <property type="entry name" value="F-box_dom"/>
</dbReference>
<dbReference type="InterPro" id="IPR011047">
    <property type="entry name" value="Quinoprotein_ADH-like_sf"/>
</dbReference>
<dbReference type="InterPro" id="IPR050796">
    <property type="entry name" value="SCF_F-box_component"/>
</dbReference>
<dbReference type="NCBIfam" id="TIGR01640">
    <property type="entry name" value="F_box_assoc_1"/>
    <property type="match status" value="1"/>
</dbReference>
<dbReference type="PANTHER" id="PTHR31672">
    <property type="entry name" value="BNACNNG10540D PROTEIN"/>
    <property type="match status" value="1"/>
</dbReference>
<dbReference type="PANTHER" id="PTHR31672:SF13">
    <property type="entry name" value="F-BOX PROTEIN CPR30-LIKE"/>
    <property type="match status" value="1"/>
</dbReference>
<dbReference type="Pfam" id="PF00646">
    <property type="entry name" value="F-box"/>
    <property type="match status" value="1"/>
</dbReference>
<dbReference type="Pfam" id="PF07734">
    <property type="entry name" value="FBA_1"/>
    <property type="match status" value="1"/>
</dbReference>
<dbReference type="SMART" id="SM00256">
    <property type="entry name" value="FBOX"/>
    <property type="match status" value="1"/>
</dbReference>
<dbReference type="SUPFAM" id="SSF81383">
    <property type="entry name" value="F-box domain"/>
    <property type="match status" value="1"/>
</dbReference>
<dbReference type="SUPFAM" id="SSF50998">
    <property type="entry name" value="Quinoprotein alcohol dehydrogenase-like"/>
    <property type="match status" value="1"/>
</dbReference>
<dbReference type="PROSITE" id="PS50181">
    <property type="entry name" value="FBOX"/>
    <property type="match status" value="1"/>
</dbReference>
<reference key="1">
    <citation type="journal article" date="1999" name="Nature">
        <title>Sequence and analysis of chromosome 2 of the plant Arabidopsis thaliana.</title>
        <authorList>
            <person name="Lin X."/>
            <person name="Kaul S."/>
            <person name="Rounsley S.D."/>
            <person name="Shea T.P."/>
            <person name="Benito M.-I."/>
            <person name="Town C.D."/>
            <person name="Fujii C.Y."/>
            <person name="Mason T.M."/>
            <person name="Bowman C.L."/>
            <person name="Barnstead M.E."/>
            <person name="Feldblyum T.V."/>
            <person name="Buell C.R."/>
            <person name="Ketchum K.A."/>
            <person name="Lee J.J."/>
            <person name="Ronning C.M."/>
            <person name="Koo H.L."/>
            <person name="Moffat K.S."/>
            <person name="Cronin L.A."/>
            <person name="Shen M."/>
            <person name="Pai G."/>
            <person name="Van Aken S."/>
            <person name="Umayam L."/>
            <person name="Tallon L.J."/>
            <person name="Gill J.E."/>
            <person name="Adams M.D."/>
            <person name="Carrera A.J."/>
            <person name="Creasy T.H."/>
            <person name="Goodman H.M."/>
            <person name="Somerville C.R."/>
            <person name="Copenhaver G.P."/>
            <person name="Preuss D."/>
            <person name="Nierman W.C."/>
            <person name="White O."/>
            <person name="Eisen J.A."/>
            <person name="Salzberg S.L."/>
            <person name="Fraser C.M."/>
            <person name="Venter J.C."/>
        </authorList>
    </citation>
    <scope>NUCLEOTIDE SEQUENCE [LARGE SCALE GENOMIC DNA]</scope>
    <source>
        <strain>cv. Columbia</strain>
    </source>
</reference>
<reference key="2">
    <citation type="journal article" date="2017" name="Plant J.">
        <title>Araport11: a complete reannotation of the Arabidopsis thaliana reference genome.</title>
        <authorList>
            <person name="Cheng C.Y."/>
            <person name="Krishnakumar V."/>
            <person name="Chan A.P."/>
            <person name="Thibaud-Nissen F."/>
            <person name="Schobel S."/>
            <person name="Town C.D."/>
        </authorList>
    </citation>
    <scope>GENOME REANNOTATION</scope>
    <source>
        <strain>cv. Columbia</strain>
    </source>
</reference>
<reference key="3">
    <citation type="journal article" date="2005" name="Plant Physiol.">
        <title>Analysis of the cDNAs of hypothetical genes on Arabidopsis chromosome 2 reveals numerous transcript variants.</title>
        <authorList>
            <person name="Xiao Y.-L."/>
            <person name="Smith S.R."/>
            <person name="Ishmael N."/>
            <person name="Redman J.C."/>
            <person name="Kumar N."/>
            <person name="Monaghan E.L."/>
            <person name="Ayele M."/>
            <person name="Haas B.J."/>
            <person name="Wu H.C."/>
            <person name="Town C.D."/>
        </authorList>
    </citation>
    <scope>NUCLEOTIDE SEQUENCE [LARGE SCALE MRNA]</scope>
    <source>
        <strain>cv. Columbia</strain>
    </source>
</reference>
<gene>
    <name type="ordered locus">At2g14710</name>
    <name type="ORF">T6B13.1</name>
</gene>
<accession>O80980</accession>
<accession>Q84RC8</accession>
<evidence type="ECO:0000255" key="1">
    <source>
        <dbReference type="PROSITE-ProRule" id="PRU00080"/>
    </source>
</evidence>
<keyword id="KW-1185">Reference proteome</keyword>